<accession>C5BH21</accession>
<keyword id="KW-0963">Cytoplasm</keyword>
<keyword id="KW-0227">DNA damage</keyword>
<keyword id="KW-0228">DNA excision</keyword>
<keyword id="KW-0234">DNA repair</keyword>
<keyword id="KW-0267">Excision nuclease</keyword>
<keyword id="KW-0742">SOS response</keyword>
<organism>
    <name type="scientific">Edwardsiella ictaluri (strain 93-146)</name>
    <dbReference type="NCBI Taxonomy" id="634503"/>
    <lineage>
        <taxon>Bacteria</taxon>
        <taxon>Pseudomonadati</taxon>
        <taxon>Pseudomonadota</taxon>
        <taxon>Gammaproteobacteria</taxon>
        <taxon>Enterobacterales</taxon>
        <taxon>Hafniaceae</taxon>
        <taxon>Edwardsiella</taxon>
    </lineage>
</organism>
<name>UVRC_EDWI9</name>
<gene>
    <name evidence="1" type="primary">uvrC</name>
    <name type="ordered locus">NT01EI_2281</name>
</gene>
<protein>
    <recommendedName>
        <fullName evidence="1">UvrABC system protein C</fullName>
        <shortName evidence="1">Protein UvrC</shortName>
    </recommendedName>
    <alternativeName>
        <fullName evidence="1">Excinuclease ABC subunit C</fullName>
    </alternativeName>
</protein>
<dbReference type="EMBL" id="CP001600">
    <property type="protein sequence ID" value="ACR69452.1"/>
    <property type="molecule type" value="Genomic_DNA"/>
</dbReference>
<dbReference type="RefSeq" id="WP_015871574.1">
    <property type="nucleotide sequence ID" value="NZ_CP169062.1"/>
</dbReference>
<dbReference type="SMR" id="C5BH21"/>
<dbReference type="GeneID" id="69539198"/>
<dbReference type="KEGG" id="eic:NT01EI_2281"/>
<dbReference type="PATRIC" id="fig|634503.3.peg.2023"/>
<dbReference type="HOGENOM" id="CLU_014841_3_2_6"/>
<dbReference type="OrthoDB" id="9804933at2"/>
<dbReference type="Proteomes" id="UP000001485">
    <property type="component" value="Chromosome"/>
</dbReference>
<dbReference type="GO" id="GO:0005737">
    <property type="term" value="C:cytoplasm"/>
    <property type="evidence" value="ECO:0007669"/>
    <property type="project" value="UniProtKB-SubCell"/>
</dbReference>
<dbReference type="GO" id="GO:0009380">
    <property type="term" value="C:excinuclease repair complex"/>
    <property type="evidence" value="ECO:0007669"/>
    <property type="project" value="InterPro"/>
</dbReference>
<dbReference type="GO" id="GO:0003677">
    <property type="term" value="F:DNA binding"/>
    <property type="evidence" value="ECO:0007669"/>
    <property type="project" value="UniProtKB-UniRule"/>
</dbReference>
<dbReference type="GO" id="GO:0009381">
    <property type="term" value="F:excinuclease ABC activity"/>
    <property type="evidence" value="ECO:0007669"/>
    <property type="project" value="UniProtKB-UniRule"/>
</dbReference>
<dbReference type="GO" id="GO:0006289">
    <property type="term" value="P:nucleotide-excision repair"/>
    <property type="evidence" value="ECO:0007669"/>
    <property type="project" value="UniProtKB-UniRule"/>
</dbReference>
<dbReference type="GO" id="GO:0009432">
    <property type="term" value="P:SOS response"/>
    <property type="evidence" value="ECO:0007669"/>
    <property type="project" value="UniProtKB-UniRule"/>
</dbReference>
<dbReference type="CDD" id="cd10434">
    <property type="entry name" value="GIY-YIG_UvrC_Cho"/>
    <property type="match status" value="1"/>
</dbReference>
<dbReference type="FunFam" id="1.10.150.20:FF:000005">
    <property type="entry name" value="UvrABC system protein C"/>
    <property type="match status" value="1"/>
</dbReference>
<dbReference type="FunFam" id="3.30.420.340:FF:000001">
    <property type="entry name" value="UvrABC system protein C"/>
    <property type="match status" value="1"/>
</dbReference>
<dbReference type="FunFam" id="3.40.1440.10:FF:000001">
    <property type="entry name" value="UvrABC system protein C"/>
    <property type="match status" value="1"/>
</dbReference>
<dbReference type="FunFam" id="4.10.860.10:FF:000002">
    <property type="entry name" value="UvrABC system protein C"/>
    <property type="match status" value="1"/>
</dbReference>
<dbReference type="Gene3D" id="1.10.150.20">
    <property type="entry name" value="5' to 3' exonuclease, C-terminal subdomain"/>
    <property type="match status" value="1"/>
</dbReference>
<dbReference type="Gene3D" id="3.40.1440.10">
    <property type="entry name" value="GIY-YIG endonuclease"/>
    <property type="match status" value="1"/>
</dbReference>
<dbReference type="Gene3D" id="4.10.860.10">
    <property type="entry name" value="UVR domain"/>
    <property type="match status" value="1"/>
</dbReference>
<dbReference type="Gene3D" id="3.30.420.340">
    <property type="entry name" value="UvrC, RNAse H endonuclease domain"/>
    <property type="match status" value="1"/>
</dbReference>
<dbReference type="HAMAP" id="MF_00203">
    <property type="entry name" value="UvrC"/>
    <property type="match status" value="1"/>
</dbReference>
<dbReference type="InterPro" id="IPR000305">
    <property type="entry name" value="GIY-YIG_endonuc"/>
</dbReference>
<dbReference type="InterPro" id="IPR035901">
    <property type="entry name" value="GIY-YIG_endonuc_sf"/>
</dbReference>
<dbReference type="InterPro" id="IPR047296">
    <property type="entry name" value="GIY-YIG_UvrC_Cho"/>
</dbReference>
<dbReference type="InterPro" id="IPR003583">
    <property type="entry name" value="Hlx-hairpin-Hlx_DNA-bd_motif"/>
</dbReference>
<dbReference type="InterPro" id="IPR010994">
    <property type="entry name" value="RuvA_2-like"/>
</dbReference>
<dbReference type="InterPro" id="IPR001943">
    <property type="entry name" value="UVR_dom"/>
</dbReference>
<dbReference type="InterPro" id="IPR036876">
    <property type="entry name" value="UVR_dom_sf"/>
</dbReference>
<dbReference type="InterPro" id="IPR050066">
    <property type="entry name" value="UvrABC_protein_C"/>
</dbReference>
<dbReference type="InterPro" id="IPR004791">
    <property type="entry name" value="UvrC"/>
</dbReference>
<dbReference type="InterPro" id="IPR001162">
    <property type="entry name" value="UvrC_RNase_H_dom"/>
</dbReference>
<dbReference type="InterPro" id="IPR038476">
    <property type="entry name" value="UvrC_RNase_H_dom_sf"/>
</dbReference>
<dbReference type="NCBIfam" id="NF001824">
    <property type="entry name" value="PRK00558.1-5"/>
    <property type="match status" value="1"/>
</dbReference>
<dbReference type="NCBIfam" id="TIGR00194">
    <property type="entry name" value="uvrC"/>
    <property type="match status" value="1"/>
</dbReference>
<dbReference type="PANTHER" id="PTHR30562:SF1">
    <property type="entry name" value="UVRABC SYSTEM PROTEIN C"/>
    <property type="match status" value="1"/>
</dbReference>
<dbReference type="PANTHER" id="PTHR30562">
    <property type="entry name" value="UVRC/OXIDOREDUCTASE"/>
    <property type="match status" value="1"/>
</dbReference>
<dbReference type="Pfam" id="PF01541">
    <property type="entry name" value="GIY-YIG"/>
    <property type="match status" value="1"/>
</dbReference>
<dbReference type="Pfam" id="PF14520">
    <property type="entry name" value="HHH_5"/>
    <property type="match status" value="1"/>
</dbReference>
<dbReference type="Pfam" id="PF02151">
    <property type="entry name" value="UVR"/>
    <property type="match status" value="1"/>
</dbReference>
<dbReference type="Pfam" id="PF22920">
    <property type="entry name" value="UvrC_RNaseH"/>
    <property type="match status" value="1"/>
</dbReference>
<dbReference type="Pfam" id="PF08459">
    <property type="entry name" value="UvrC_RNaseH_dom"/>
    <property type="match status" value="1"/>
</dbReference>
<dbReference type="SMART" id="SM00465">
    <property type="entry name" value="GIYc"/>
    <property type="match status" value="1"/>
</dbReference>
<dbReference type="SMART" id="SM00278">
    <property type="entry name" value="HhH1"/>
    <property type="match status" value="2"/>
</dbReference>
<dbReference type="SUPFAM" id="SSF46600">
    <property type="entry name" value="C-terminal UvrC-binding domain of UvrB"/>
    <property type="match status" value="1"/>
</dbReference>
<dbReference type="SUPFAM" id="SSF82771">
    <property type="entry name" value="GIY-YIG endonuclease"/>
    <property type="match status" value="1"/>
</dbReference>
<dbReference type="SUPFAM" id="SSF47781">
    <property type="entry name" value="RuvA domain 2-like"/>
    <property type="match status" value="1"/>
</dbReference>
<dbReference type="PROSITE" id="PS50164">
    <property type="entry name" value="GIY_YIG"/>
    <property type="match status" value="1"/>
</dbReference>
<dbReference type="PROSITE" id="PS50151">
    <property type="entry name" value="UVR"/>
    <property type="match status" value="1"/>
</dbReference>
<dbReference type="PROSITE" id="PS50165">
    <property type="entry name" value="UVRC"/>
    <property type="match status" value="1"/>
</dbReference>
<evidence type="ECO:0000255" key="1">
    <source>
        <dbReference type="HAMAP-Rule" id="MF_00203"/>
    </source>
</evidence>
<proteinExistence type="inferred from homology"/>
<feature type="chain" id="PRO_1000204119" description="UvrABC system protein C">
    <location>
        <begin position="1"/>
        <end position="610"/>
    </location>
</feature>
<feature type="domain" description="GIY-YIG" evidence="1">
    <location>
        <begin position="16"/>
        <end position="94"/>
    </location>
</feature>
<feature type="domain" description="UVR" evidence="1">
    <location>
        <begin position="204"/>
        <end position="239"/>
    </location>
</feature>
<reference key="1">
    <citation type="submission" date="2009-03" db="EMBL/GenBank/DDBJ databases">
        <title>Complete genome sequence of Edwardsiella ictaluri 93-146.</title>
        <authorList>
            <person name="Williams M.L."/>
            <person name="Gillaspy A.F."/>
            <person name="Dyer D.W."/>
            <person name="Thune R.L."/>
            <person name="Waldbieser G.C."/>
            <person name="Schuster S.C."/>
            <person name="Gipson J."/>
            <person name="Zaitshik J."/>
            <person name="Landry C."/>
            <person name="Lawrence M.L."/>
        </authorList>
    </citation>
    <scope>NUCLEOTIDE SEQUENCE [LARGE SCALE GENOMIC DNA]</scope>
    <source>
        <strain>93-146</strain>
    </source>
</reference>
<comment type="function">
    <text evidence="1">The UvrABC repair system catalyzes the recognition and processing of DNA lesions. UvrC both incises the 5' and 3' sides of the lesion. The N-terminal half is responsible for the 3' incision and the C-terminal half is responsible for the 5' incision.</text>
</comment>
<comment type="subunit">
    <text evidence="1">Interacts with UvrB in an incision complex.</text>
</comment>
<comment type="subcellular location">
    <subcellularLocation>
        <location evidence="1">Cytoplasm</location>
    </subcellularLocation>
</comment>
<comment type="similarity">
    <text evidence="1">Belongs to the UvrC family.</text>
</comment>
<sequence length="610" mass="69066">MSERFDAVAFLKTVTNQPGVYRMYDAGAEVIYVGKAKDLKKRLSSYFRCQLASRKTEALVRQIAQIDVTVTHTETEALLLEHNYIKRYQPRYNVLLRDDKSYPLIFLSADRHPRLAVHRGARRARGDYFGPFPNANAVRETLALLQKLFPIRQCEDSVYRNRSRPCLQYQIQRCLGPCVTGLVNDGEYARQVEYVRLFLSGKDSQVIDALVARMEEASRALRFEEAARLRDQIQAVRRVTERQFISGDHEDIDVIGVAFEAGMACIHVLFIRHGQVLGSRSYFPRVPAGTTLAEVLQTFVGQFYLQGSQIRTLPGEILIDFLLPDRKLLADSISELAGRRIPIQSQPRGDRARYLKLARTNAVTALNSKLSQQSTILQRLVQLEQVLQRADIQRMECFDISHTMGEETVASCVVFDRNGPLRSEYRRYNIKGITPGDDYAAMDQVLRRRYDKALNEEKIPDIIFIDGGKGQLGQAKQVFAELEVPWDTHRPLLLGIAKGSDRKAGLETLFFEAQGEGFSLPPDSPALHLIQHIRDESHNHAIAGHRKRRAKVRSTSALESIEGIGPKRRQLLLKYMGGMQPLRDASIDEIAKVPGISAALAEKIHYALKQ</sequence>